<reference key="1">
    <citation type="journal article" date="2002" name="Nature">
        <title>Comparison of the genomes of two Xanthomonas pathogens with differing host specificities.</title>
        <authorList>
            <person name="da Silva A.C.R."/>
            <person name="Ferro J.A."/>
            <person name="Reinach F.C."/>
            <person name="Farah C.S."/>
            <person name="Furlan L.R."/>
            <person name="Quaggio R.B."/>
            <person name="Monteiro-Vitorello C.B."/>
            <person name="Van Sluys M.A."/>
            <person name="Almeida N.F. Jr."/>
            <person name="Alves L.M.C."/>
            <person name="do Amaral A.M."/>
            <person name="Bertolini M.C."/>
            <person name="Camargo L.E.A."/>
            <person name="Camarotte G."/>
            <person name="Cannavan F."/>
            <person name="Cardozo J."/>
            <person name="Chambergo F."/>
            <person name="Ciapina L.P."/>
            <person name="Cicarelli R.M.B."/>
            <person name="Coutinho L.L."/>
            <person name="Cursino-Santos J.R."/>
            <person name="El-Dorry H."/>
            <person name="Faria J.B."/>
            <person name="Ferreira A.J.S."/>
            <person name="Ferreira R.C.C."/>
            <person name="Ferro M.I.T."/>
            <person name="Formighieri E.F."/>
            <person name="Franco M.C."/>
            <person name="Greggio C.C."/>
            <person name="Gruber A."/>
            <person name="Katsuyama A.M."/>
            <person name="Kishi L.T."/>
            <person name="Leite R.P."/>
            <person name="Lemos E.G.M."/>
            <person name="Lemos M.V.F."/>
            <person name="Locali E.C."/>
            <person name="Machado M.A."/>
            <person name="Madeira A.M.B.N."/>
            <person name="Martinez-Rossi N.M."/>
            <person name="Martins E.C."/>
            <person name="Meidanis J."/>
            <person name="Menck C.F.M."/>
            <person name="Miyaki C.Y."/>
            <person name="Moon D.H."/>
            <person name="Moreira L.M."/>
            <person name="Novo M.T.M."/>
            <person name="Okura V.K."/>
            <person name="Oliveira M.C."/>
            <person name="Oliveira V.R."/>
            <person name="Pereira H.A."/>
            <person name="Rossi A."/>
            <person name="Sena J.A.D."/>
            <person name="Silva C."/>
            <person name="de Souza R.F."/>
            <person name="Spinola L.A.F."/>
            <person name="Takita M.A."/>
            <person name="Tamura R.E."/>
            <person name="Teixeira E.C."/>
            <person name="Tezza R.I.D."/>
            <person name="Trindade dos Santos M."/>
            <person name="Truffi D."/>
            <person name="Tsai S.M."/>
            <person name="White F.F."/>
            <person name="Setubal J.C."/>
            <person name="Kitajima J.P."/>
        </authorList>
    </citation>
    <scope>NUCLEOTIDE SEQUENCE [LARGE SCALE GENOMIC DNA]</scope>
    <source>
        <strain>ATCC 33913 / DSM 3586 / NCPPB 528 / LMG 568 / P 25</strain>
    </source>
</reference>
<dbReference type="EMBL" id="AE008922">
    <property type="protein sequence ID" value="AAM41785.1"/>
    <property type="molecule type" value="Genomic_DNA"/>
</dbReference>
<dbReference type="RefSeq" id="NP_637861.1">
    <property type="nucleotide sequence ID" value="NC_003902.1"/>
</dbReference>
<dbReference type="SMR" id="Q8P7U7"/>
<dbReference type="STRING" id="190485.XCC2511"/>
<dbReference type="EnsemblBacteria" id="AAM41785">
    <property type="protein sequence ID" value="AAM41785"/>
    <property type="gene ID" value="XCC2511"/>
</dbReference>
<dbReference type="KEGG" id="xcc:XCC2511"/>
<dbReference type="PATRIC" id="fig|190485.4.peg.2678"/>
<dbReference type="eggNOG" id="COG0532">
    <property type="taxonomic scope" value="Bacteria"/>
</dbReference>
<dbReference type="HOGENOM" id="CLU_006301_6_0_6"/>
<dbReference type="OrthoDB" id="9811804at2"/>
<dbReference type="Proteomes" id="UP000001010">
    <property type="component" value="Chromosome"/>
</dbReference>
<dbReference type="GO" id="GO:0005737">
    <property type="term" value="C:cytoplasm"/>
    <property type="evidence" value="ECO:0000318"/>
    <property type="project" value="GO_Central"/>
</dbReference>
<dbReference type="GO" id="GO:0005829">
    <property type="term" value="C:cytosol"/>
    <property type="evidence" value="ECO:0000318"/>
    <property type="project" value="GO_Central"/>
</dbReference>
<dbReference type="GO" id="GO:0005525">
    <property type="term" value="F:GTP binding"/>
    <property type="evidence" value="ECO:0007669"/>
    <property type="project" value="UniProtKB-KW"/>
</dbReference>
<dbReference type="GO" id="GO:0003924">
    <property type="term" value="F:GTPase activity"/>
    <property type="evidence" value="ECO:0007669"/>
    <property type="project" value="UniProtKB-UniRule"/>
</dbReference>
<dbReference type="GO" id="GO:0097216">
    <property type="term" value="F:guanosine tetraphosphate binding"/>
    <property type="evidence" value="ECO:0007669"/>
    <property type="project" value="UniProtKB-ARBA"/>
</dbReference>
<dbReference type="GO" id="GO:0003743">
    <property type="term" value="F:translation initiation factor activity"/>
    <property type="evidence" value="ECO:0000318"/>
    <property type="project" value="GO_Central"/>
</dbReference>
<dbReference type="GO" id="GO:0006413">
    <property type="term" value="P:translational initiation"/>
    <property type="evidence" value="ECO:0000318"/>
    <property type="project" value="GO_Central"/>
</dbReference>
<dbReference type="CDD" id="cd01887">
    <property type="entry name" value="IF2_eIF5B"/>
    <property type="match status" value="1"/>
</dbReference>
<dbReference type="CDD" id="cd03702">
    <property type="entry name" value="IF2_mtIF2_II"/>
    <property type="match status" value="1"/>
</dbReference>
<dbReference type="CDD" id="cd03692">
    <property type="entry name" value="mtIF2_IVc"/>
    <property type="match status" value="1"/>
</dbReference>
<dbReference type="FunFam" id="2.40.30.10:FF:000008">
    <property type="entry name" value="Translation initiation factor IF-2"/>
    <property type="match status" value="1"/>
</dbReference>
<dbReference type="FunFam" id="2.40.30.10:FF:000054">
    <property type="entry name" value="Translation initiation factor IF-2"/>
    <property type="match status" value="1"/>
</dbReference>
<dbReference type="FunFam" id="3.40.50.10050:FF:000001">
    <property type="entry name" value="Translation initiation factor IF-2"/>
    <property type="match status" value="1"/>
</dbReference>
<dbReference type="FunFam" id="3.40.50.300:FF:000019">
    <property type="entry name" value="Translation initiation factor IF-2"/>
    <property type="match status" value="1"/>
</dbReference>
<dbReference type="Gene3D" id="3.40.50.300">
    <property type="entry name" value="P-loop containing nucleotide triphosphate hydrolases"/>
    <property type="match status" value="1"/>
</dbReference>
<dbReference type="Gene3D" id="3.30.56.50">
    <property type="entry name" value="Putative DNA-binding domain, N-terminal subdomain of bacterial translation initiation factor IF2"/>
    <property type="match status" value="1"/>
</dbReference>
<dbReference type="Gene3D" id="2.40.30.10">
    <property type="entry name" value="Translation factors"/>
    <property type="match status" value="2"/>
</dbReference>
<dbReference type="Gene3D" id="3.40.50.10050">
    <property type="entry name" value="Translation initiation factor IF- 2, domain 3"/>
    <property type="match status" value="1"/>
</dbReference>
<dbReference type="HAMAP" id="MF_00100_B">
    <property type="entry name" value="IF_2_B"/>
    <property type="match status" value="1"/>
</dbReference>
<dbReference type="InterPro" id="IPR009061">
    <property type="entry name" value="DNA-bd_dom_put_sf"/>
</dbReference>
<dbReference type="InterPro" id="IPR053905">
    <property type="entry name" value="EF-G-like_DII"/>
</dbReference>
<dbReference type="InterPro" id="IPR004161">
    <property type="entry name" value="EFTu-like_2"/>
</dbReference>
<dbReference type="InterPro" id="IPR013575">
    <property type="entry name" value="IF2_assoc_dom_bac"/>
</dbReference>
<dbReference type="InterPro" id="IPR044145">
    <property type="entry name" value="IF2_II"/>
</dbReference>
<dbReference type="InterPro" id="IPR006847">
    <property type="entry name" value="IF2_N"/>
</dbReference>
<dbReference type="InterPro" id="IPR027417">
    <property type="entry name" value="P-loop_NTPase"/>
</dbReference>
<dbReference type="InterPro" id="IPR005225">
    <property type="entry name" value="Small_GTP-bd"/>
</dbReference>
<dbReference type="InterPro" id="IPR000795">
    <property type="entry name" value="T_Tr_GTP-bd_dom"/>
</dbReference>
<dbReference type="InterPro" id="IPR000178">
    <property type="entry name" value="TF_IF2_bacterial-like"/>
</dbReference>
<dbReference type="InterPro" id="IPR015760">
    <property type="entry name" value="TIF_IF2"/>
</dbReference>
<dbReference type="InterPro" id="IPR023115">
    <property type="entry name" value="TIF_IF2_dom3"/>
</dbReference>
<dbReference type="InterPro" id="IPR036925">
    <property type="entry name" value="TIF_IF2_dom3_sf"/>
</dbReference>
<dbReference type="InterPro" id="IPR009000">
    <property type="entry name" value="Transl_B-barrel_sf"/>
</dbReference>
<dbReference type="NCBIfam" id="TIGR00487">
    <property type="entry name" value="IF-2"/>
    <property type="match status" value="1"/>
</dbReference>
<dbReference type="NCBIfam" id="TIGR00231">
    <property type="entry name" value="small_GTP"/>
    <property type="match status" value="1"/>
</dbReference>
<dbReference type="PANTHER" id="PTHR43381:SF5">
    <property type="entry name" value="TR-TYPE G DOMAIN-CONTAINING PROTEIN"/>
    <property type="match status" value="1"/>
</dbReference>
<dbReference type="PANTHER" id="PTHR43381">
    <property type="entry name" value="TRANSLATION INITIATION FACTOR IF-2-RELATED"/>
    <property type="match status" value="1"/>
</dbReference>
<dbReference type="Pfam" id="PF22042">
    <property type="entry name" value="EF-G_D2"/>
    <property type="match status" value="1"/>
</dbReference>
<dbReference type="Pfam" id="PF00009">
    <property type="entry name" value="GTP_EFTU"/>
    <property type="match status" value="1"/>
</dbReference>
<dbReference type="Pfam" id="PF03144">
    <property type="entry name" value="GTP_EFTU_D2"/>
    <property type="match status" value="1"/>
</dbReference>
<dbReference type="Pfam" id="PF11987">
    <property type="entry name" value="IF-2"/>
    <property type="match status" value="1"/>
</dbReference>
<dbReference type="Pfam" id="PF08364">
    <property type="entry name" value="IF2_assoc"/>
    <property type="match status" value="1"/>
</dbReference>
<dbReference type="Pfam" id="PF04760">
    <property type="entry name" value="IF2_N"/>
    <property type="match status" value="1"/>
</dbReference>
<dbReference type="SUPFAM" id="SSF52156">
    <property type="entry name" value="Initiation factor IF2/eIF5b, domain 3"/>
    <property type="match status" value="1"/>
</dbReference>
<dbReference type="SUPFAM" id="SSF52540">
    <property type="entry name" value="P-loop containing nucleoside triphosphate hydrolases"/>
    <property type="match status" value="1"/>
</dbReference>
<dbReference type="SUPFAM" id="SSF46955">
    <property type="entry name" value="Putative DNA-binding domain"/>
    <property type="match status" value="1"/>
</dbReference>
<dbReference type="SUPFAM" id="SSF50447">
    <property type="entry name" value="Translation proteins"/>
    <property type="match status" value="2"/>
</dbReference>
<dbReference type="PROSITE" id="PS51722">
    <property type="entry name" value="G_TR_2"/>
    <property type="match status" value="1"/>
</dbReference>
<dbReference type="PROSITE" id="PS01176">
    <property type="entry name" value="IF2"/>
    <property type="match status" value="1"/>
</dbReference>
<comment type="function">
    <text evidence="2">One of the essential components for the initiation of protein synthesis. Protects formylmethionyl-tRNA from spontaneous hydrolysis and promotes its binding to the 30S ribosomal subunits. Also involved in the hydrolysis of GTP during the formation of the 70S ribosomal complex.</text>
</comment>
<comment type="subcellular location">
    <subcellularLocation>
        <location evidence="2">Cytoplasm</location>
    </subcellularLocation>
</comment>
<comment type="similarity">
    <text evidence="2">Belongs to the TRAFAC class translation factor GTPase superfamily. Classic translation factor GTPase family. IF-2 subfamily.</text>
</comment>
<gene>
    <name evidence="2" type="primary">infB</name>
    <name type="ordered locus">XCC2511</name>
</gene>
<feature type="chain" id="PRO_0000137286" description="Translation initiation factor IF-2">
    <location>
        <begin position="1"/>
        <end position="916"/>
    </location>
</feature>
<feature type="domain" description="tr-type G">
    <location>
        <begin position="415"/>
        <end position="584"/>
    </location>
</feature>
<feature type="region of interest" description="Disordered" evidence="3">
    <location>
        <begin position="151"/>
        <end position="262"/>
    </location>
</feature>
<feature type="region of interest" description="Disordered" evidence="3">
    <location>
        <begin position="280"/>
        <end position="328"/>
    </location>
</feature>
<feature type="region of interest" description="G1" evidence="1">
    <location>
        <begin position="424"/>
        <end position="431"/>
    </location>
</feature>
<feature type="region of interest" description="G2" evidence="1">
    <location>
        <begin position="449"/>
        <end position="453"/>
    </location>
</feature>
<feature type="region of interest" description="G3" evidence="1">
    <location>
        <begin position="470"/>
        <end position="473"/>
    </location>
</feature>
<feature type="region of interest" description="G4" evidence="1">
    <location>
        <begin position="524"/>
        <end position="527"/>
    </location>
</feature>
<feature type="region of interest" description="G5" evidence="1">
    <location>
        <begin position="560"/>
        <end position="562"/>
    </location>
</feature>
<feature type="compositionally biased region" description="Basic and acidic residues" evidence="3">
    <location>
        <begin position="151"/>
        <end position="191"/>
    </location>
</feature>
<feature type="compositionally biased region" description="Low complexity" evidence="3">
    <location>
        <begin position="192"/>
        <end position="243"/>
    </location>
</feature>
<feature type="compositionally biased region" description="Low complexity" evidence="3">
    <location>
        <begin position="293"/>
        <end position="305"/>
    </location>
</feature>
<feature type="binding site" evidence="2">
    <location>
        <begin position="424"/>
        <end position="431"/>
    </location>
    <ligand>
        <name>GTP</name>
        <dbReference type="ChEBI" id="CHEBI:37565"/>
    </ligand>
</feature>
<feature type="binding site" evidence="2">
    <location>
        <begin position="470"/>
        <end position="474"/>
    </location>
    <ligand>
        <name>GTP</name>
        <dbReference type="ChEBI" id="CHEBI:37565"/>
    </ligand>
</feature>
<feature type="binding site" evidence="2">
    <location>
        <begin position="524"/>
        <end position="527"/>
    </location>
    <ligand>
        <name>GTP</name>
        <dbReference type="ChEBI" id="CHEBI:37565"/>
    </ligand>
</feature>
<evidence type="ECO:0000250" key="1"/>
<evidence type="ECO:0000255" key="2">
    <source>
        <dbReference type="HAMAP-Rule" id="MF_00100"/>
    </source>
</evidence>
<evidence type="ECO:0000256" key="3">
    <source>
        <dbReference type="SAM" id="MobiDB-lite"/>
    </source>
</evidence>
<organism>
    <name type="scientific">Xanthomonas campestris pv. campestris (strain ATCC 33913 / DSM 3586 / NCPPB 528 / LMG 568 / P 25)</name>
    <dbReference type="NCBI Taxonomy" id="190485"/>
    <lineage>
        <taxon>Bacteria</taxon>
        <taxon>Pseudomonadati</taxon>
        <taxon>Pseudomonadota</taxon>
        <taxon>Gammaproteobacteria</taxon>
        <taxon>Lysobacterales</taxon>
        <taxon>Lysobacteraceae</taxon>
        <taxon>Xanthomonas</taxon>
    </lineage>
</organism>
<keyword id="KW-0963">Cytoplasm</keyword>
<keyword id="KW-0342">GTP-binding</keyword>
<keyword id="KW-0396">Initiation factor</keyword>
<keyword id="KW-0547">Nucleotide-binding</keyword>
<keyword id="KW-0648">Protein biosynthesis</keyword>
<keyword id="KW-1185">Reference proteome</keyword>
<sequence length="916" mass="97606">MLWARGRQPDHRIRMSQQTTIRKLAELVNTPVDKLLVQLAEAGMKFSGPDQVVTSTEKMKLLGFLRRTHGKADTPAEAASEAAKKITLNRRKLQEVTVNAGRTKTTVNVEVRQKRTYVKSENEGSGRAAPMTPDEERADILAKLAASRQRNLDEQQRLAESDRARDEAIQRKRDEEQAAKDRVEAERKAAEEAAAAASAPAPVAAAPAPSSAPAARAPSSPSSAPRPARPAGASPASRPATPARPDDRNNAAKHKTRGSHVMVAGVEDDDATKRFAGQLHLSAADRARRSNVRGKPTGRPGSSSSRRNDGGRGSNQSNSGPHGFERPTAPVVREVAIGETITVADLAQKLALKGGDVVKALFKMGVMATITQSIDHDTAALVTEELGHKAVRADNADFEDALLAHAEDAQGETTSRPPVVTIMGHVDHGKTSLLDYIRRTKIASGEAGGITQHIGAYHVETGRGVISFLDTPGHAAFTSMRARGAKITDIVVLVVAADDGVMPQTKEAVAHAKAAGVPLIVAVNKIDKAGADPLRVKNELLAENVVAEDFGGDTQFIEVSAKVGTGVDTLLDAISLQAEVLELKAVADGRASGTVIESSLDKGRGPVATVLVQQGALKRGDYLVCGIQYGRVRALFDETGHQPASAGPSIPVQVLGLSGVPEAGDDFVVVDDERLAKDVAQQRETKRRESRLVASATNRMEDILAQMGKGEGQQVLNLVIKADVQGSVEALKQSLVALSNDDIRINVIHSGVGGITESDANSAAASKATIIGFNVRADASARKIVESNGIDLRYFSIIYDVIDQVKQVASGLLGVEIREEIIGIAQVRDVFRSSKFGAVAGCMIIEGVVKRSKPIRVLRDSVVVFEGELESLRRFKENVDEVRNGTECGIGVKAYNDVKAGDQIECFERIEVARTL</sequence>
<proteinExistence type="inferred from homology"/>
<accession>Q8P7U7</accession>
<name>IF2_XANCP</name>
<protein>
    <recommendedName>
        <fullName evidence="2">Translation initiation factor IF-2</fullName>
    </recommendedName>
</protein>